<keyword id="KW-1185">Reference proteome</keyword>
<keyword id="KW-0687">Ribonucleoprotein</keyword>
<keyword id="KW-0689">Ribosomal protein</keyword>
<protein>
    <recommendedName>
        <fullName evidence="1">Small ribosomal subunit protein uS9</fullName>
    </recommendedName>
    <alternativeName>
        <fullName evidence="2">30S ribosomal protein S9</fullName>
    </alternativeName>
</protein>
<dbReference type="EMBL" id="CP000884">
    <property type="protein sequence ID" value="ABX38541.1"/>
    <property type="molecule type" value="Genomic_DNA"/>
</dbReference>
<dbReference type="RefSeq" id="WP_012207710.1">
    <property type="nucleotide sequence ID" value="NC_010002.1"/>
</dbReference>
<dbReference type="SMR" id="A9C178"/>
<dbReference type="STRING" id="398578.Daci_5913"/>
<dbReference type="GeneID" id="94690033"/>
<dbReference type="KEGG" id="dac:Daci_5913"/>
<dbReference type="eggNOG" id="COG0103">
    <property type="taxonomic scope" value="Bacteria"/>
</dbReference>
<dbReference type="HOGENOM" id="CLU_046483_2_1_4"/>
<dbReference type="Proteomes" id="UP000000784">
    <property type="component" value="Chromosome"/>
</dbReference>
<dbReference type="GO" id="GO:0022627">
    <property type="term" value="C:cytosolic small ribosomal subunit"/>
    <property type="evidence" value="ECO:0007669"/>
    <property type="project" value="TreeGrafter"/>
</dbReference>
<dbReference type="GO" id="GO:0003723">
    <property type="term" value="F:RNA binding"/>
    <property type="evidence" value="ECO:0007669"/>
    <property type="project" value="TreeGrafter"/>
</dbReference>
<dbReference type="GO" id="GO:0003735">
    <property type="term" value="F:structural constituent of ribosome"/>
    <property type="evidence" value="ECO:0007669"/>
    <property type="project" value="InterPro"/>
</dbReference>
<dbReference type="GO" id="GO:0006412">
    <property type="term" value="P:translation"/>
    <property type="evidence" value="ECO:0007669"/>
    <property type="project" value="UniProtKB-UniRule"/>
</dbReference>
<dbReference type="FunFam" id="3.30.230.10:FF:000001">
    <property type="entry name" value="30S ribosomal protein S9"/>
    <property type="match status" value="1"/>
</dbReference>
<dbReference type="Gene3D" id="3.30.230.10">
    <property type="match status" value="1"/>
</dbReference>
<dbReference type="HAMAP" id="MF_00532_B">
    <property type="entry name" value="Ribosomal_uS9_B"/>
    <property type="match status" value="1"/>
</dbReference>
<dbReference type="InterPro" id="IPR020568">
    <property type="entry name" value="Ribosomal_Su5_D2-typ_SF"/>
</dbReference>
<dbReference type="InterPro" id="IPR000754">
    <property type="entry name" value="Ribosomal_uS9"/>
</dbReference>
<dbReference type="InterPro" id="IPR023035">
    <property type="entry name" value="Ribosomal_uS9_bac/plastid"/>
</dbReference>
<dbReference type="InterPro" id="IPR020574">
    <property type="entry name" value="Ribosomal_uS9_CS"/>
</dbReference>
<dbReference type="InterPro" id="IPR014721">
    <property type="entry name" value="Ribsml_uS5_D2-typ_fold_subgr"/>
</dbReference>
<dbReference type="NCBIfam" id="NF001099">
    <property type="entry name" value="PRK00132.1"/>
    <property type="match status" value="1"/>
</dbReference>
<dbReference type="PANTHER" id="PTHR21569">
    <property type="entry name" value="RIBOSOMAL PROTEIN S9"/>
    <property type="match status" value="1"/>
</dbReference>
<dbReference type="PANTHER" id="PTHR21569:SF1">
    <property type="entry name" value="SMALL RIBOSOMAL SUBUNIT PROTEIN US9M"/>
    <property type="match status" value="1"/>
</dbReference>
<dbReference type="Pfam" id="PF00380">
    <property type="entry name" value="Ribosomal_S9"/>
    <property type="match status" value="1"/>
</dbReference>
<dbReference type="SUPFAM" id="SSF54211">
    <property type="entry name" value="Ribosomal protein S5 domain 2-like"/>
    <property type="match status" value="1"/>
</dbReference>
<dbReference type="PROSITE" id="PS00360">
    <property type="entry name" value="RIBOSOMAL_S9"/>
    <property type="match status" value="1"/>
</dbReference>
<organism>
    <name type="scientific">Delftia acidovorans (strain DSM 14801 / SPH-1)</name>
    <dbReference type="NCBI Taxonomy" id="398578"/>
    <lineage>
        <taxon>Bacteria</taxon>
        <taxon>Pseudomonadati</taxon>
        <taxon>Pseudomonadota</taxon>
        <taxon>Betaproteobacteria</taxon>
        <taxon>Burkholderiales</taxon>
        <taxon>Comamonadaceae</taxon>
        <taxon>Delftia</taxon>
    </lineage>
</organism>
<comment type="similarity">
    <text evidence="1">Belongs to the universal ribosomal protein uS9 family.</text>
</comment>
<reference key="1">
    <citation type="submission" date="2007-11" db="EMBL/GenBank/DDBJ databases">
        <title>Complete sequence of Delftia acidovorans DSM 14801 / SPH-1.</title>
        <authorList>
            <person name="Copeland A."/>
            <person name="Lucas S."/>
            <person name="Lapidus A."/>
            <person name="Barry K."/>
            <person name="Glavina del Rio T."/>
            <person name="Dalin E."/>
            <person name="Tice H."/>
            <person name="Pitluck S."/>
            <person name="Lowry S."/>
            <person name="Clum A."/>
            <person name="Schmutz J."/>
            <person name="Larimer F."/>
            <person name="Land M."/>
            <person name="Hauser L."/>
            <person name="Kyrpides N."/>
            <person name="Kim E."/>
            <person name="Schleheck D."/>
            <person name="Richardson P."/>
        </authorList>
    </citation>
    <scope>NUCLEOTIDE SEQUENCE [LARGE SCALE GENOMIC DNA]</scope>
    <source>
        <strain>DSM 14801 / SPH-1</strain>
    </source>
</reference>
<sequence length="130" mass="14216">MIGDWNNGTGRRKSSVARVFLKKGSGKITVNGKDIQEYFGRETSIMIAKQPLALTSNLEAFDIQVNVHGGGESGQAGATRHGITRALIDYDAALKPVLSQAGFVTRDAREVERKKVGLRSARRAKQFSKR</sequence>
<accession>A9C178</accession>
<gene>
    <name evidence="1" type="primary">rpsI</name>
    <name type="ordered locus">Daci_5913</name>
</gene>
<evidence type="ECO:0000255" key="1">
    <source>
        <dbReference type="HAMAP-Rule" id="MF_00532"/>
    </source>
</evidence>
<evidence type="ECO:0000305" key="2"/>
<name>RS9_DELAS</name>
<feature type="chain" id="PRO_1000128113" description="Small ribosomal subunit protein uS9">
    <location>
        <begin position="1"/>
        <end position="130"/>
    </location>
</feature>
<proteinExistence type="inferred from homology"/>